<gene>
    <name evidence="1" type="primary">glgS</name>
    <name type="ordered locus">ECIAI1_3196</name>
</gene>
<proteinExistence type="inferred from homology"/>
<accession>B7LZJ8</accession>
<sequence>MDHSLNSLNNFDFLARSFARMHAEGRPVDILAVTGNMDEEHRTWFCARYAWYCQQMMQARELELEH</sequence>
<evidence type="ECO:0000255" key="1">
    <source>
        <dbReference type="HAMAP-Rule" id="MF_00525"/>
    </source>
</evidence>
<feature type="chain" id="PRO_1000127737" description="Surface composition regulator">
    <location>
        <begin position="1"/>
        <end position="66"/>
    </location>
</feature>
<organism>
    <name type="scientific">Escherichia coli O8 (strain IAI1)</name>
    <dbReference type="NCBI Taxonomy" id="585034"/>
    <lineage>
        <taxon>Bacteria</taxon>
        <taxon>Pseudomonadati</taxon>
        <taxon>Pseudomonadota</taxon>
        <taxon>Gammaproteobacteria</taxon>
        <taxon>Enterobacterales</taxon>
        <taxon>Enterobacteriaceae</taxon>
        <taxon>Escherichia</taxon>
    </lineage>
</organism>
<dbReference type="EMBL" id="CU928160">
    <property type="protein sequence ID" value="CAR00010.1"/>
    <property type="molecule type" value="Genomic_DNA"/>
</dbReference>
<dbReference type="RefSeq" id="WP_000350095.1">
    <property type="nucleotide sequence ID" value="NC_011741.1"/>
</dbReference>
<dbReference type="SMR" id="B7LZJ8"/>
<dbReference type="GeneID" id="93778946"/>
<dbReference type="KEGG" id="ecr:ECIAI1_3196"/>
<dbReference type="HOGENOM" id="CLU_185971_0_0_6"/>
<dbReference type="GO" id="GO:1902201">
    <property type="term" value="P:negative regulation of bacterial-type flagellum-dependent cell motility"/>
    <property type="evidence" value="ECO:0007669"/>
    <property type="project" value="UniProtKB-UniRule"/>
</dbReference>
<dbReference type="GO" id="GO:1900191">
    <property type="term" value="P:negative regulation of single-species biofilm formation"/>
    <property type="evidence" value="ECO:0007669"/>
    <property type="project" value="UniProtKB-UniRule"/>
</dbReference>
<dbReference type="FunFam" id="1.20.970.20:FF:000001">
    <property type="entry name" value="Surface composition regulator"/>
    <property type="match status" value="1"/>
</dbReference>
<dbReference type="Gene3D" id="1.20.970.20">
    <property type="entry name" value="Glycogen synthesis protein GlgS"/>
    <property type="match status" value="1"/>
</dbReference>
<dbReference type="HAMAP" id="MF_00525">
    <property type="entry name" value="GlgS"/>
    <property type="match status" value="1"/>
</dbReference>
<dbReference type="InterPro" id="IPR015065">
    <property type="entry name" value="GlgS"/>
</dbReference>
<dbReference type="InterPro" id="IPR036295">
    <property type="entry name" value="GlgS_sf"/>
</dbReference>
<dbReference type="NCBIfam" id="NF002793">
    <property type="entry name" value="PRK02922.1"/>
    <property type="match status" value="1"/>
</dbReference>
<dbReference type="Pfam" id="PF08971">
    <property type="entry name" value="GlgS"/>
    <property type="match status" value="1"/>
</dbReference>
<dbReference type="SUPFAM" id="SSF109747">
    <property type="entry name" value="Glycogen synthesis protein GlgS"/>
    <property type="match status" value="1"/>
</dbReference>
<reference key="1">
    <citation type="journal article" date="2009" name="PLoS Genet.">
        <title>Organised genome dynamics in the Escherichia coli species results in highly diverse adaptive paths.</title>
        <authorList>
            <person name="Touchon M."/>
            <person name="Hoede C."/>
            <person name="Tenaillon O."/>
            <person name="Barbe V."/>
            <person name="Baeriswyl S."/>
            <person name="Bidet P."/>
            <person name="Bingen E."/>
            <person name="Bonacorsi S."/>
            <person name="Bouchier C."/>
            <person name="Bouvet O."/>
            <person name="Calteau A."/>
            <person name="Chiapello H."/>
            <person name="Clermont O."/>
            <person name="Cruveiller S."/>
            <person name="Danchin A."/>
            <person name="Diard M."/>
            <person name="Dossat C."/>
            <person name="Karoui M.E."/>
            <person name="Frapy E."/>
            <person name="Garry L."/>
            <person name="Ghigo J.M."/>
            <person name="Gilles A.M."/>
            <person name="Johnson J."/>
            <person name="Le Bouguenec C."/>
            <person name="Lescat M."/>
            <person name="Mangenot S."/>
            <person name="Martinez-Jehanne V."/>
            <person name="Matic I."/>
            <person name="Nassif X."/>
            <person name="Oztas S."/>
            <person name="Petit M.A."/>
            <person name="Pichon C."/>
            <person name="Rouy Z."/>
            <person name="Ruf C.S."/>
            <person name="Schneider D."/>
            <person name="Tourret J."/>
            <person name="Vacherie B."/>
            <person name="Vallenet D."/>
            <person name="Medigue C."/>
            <person name="Rocha E.P.C."/>
            <person name="Denamur E."/>
        </authorList>
    </citation>
    <scope>NUCLEOTIDE SEQUENCE [LARGE SCALE GENOMIC DNA]</scope>
    <source>
        <strain>IAI1</strain>
    </source>
</reference>
<protein>
    <recommendedName>
        <fullName evidence="1">Surface composition regulator</fullName>
    </recommendedName>
</protein>
<name>GLGS_ECO8A</name>
<comment type="function">
    <text evidence="1">Major determinant of cell surface composition. Negatively regulates motility, adhesion and synthesis of biofilm exopolysaccharides.</text>
</comment>
<comment type="similarity">
    <text evidence="1">Belongs to the GlgS family.</text>
</comment>